<dbReference type="EC" id="2.7.7.18" evidence="1"/>
<dbReference type="EMBL" id="CP000821">
    <property type="protein sequence ID" value="ABV38086.1"/>
    <property type="molecule type" value="Genomic_DNA"/>
</dbReference>
<dbReference type="RefSeq" id="WP_012143816.1">
    <property type="nucleotide sequence ID" value="NC_009831.1"/>
</dbReference>
<dbReference type="SMR" id="A8FZ13"/>
<dbReference type="STRING" id="425104.Ssed_3482"/>
<dbReference type="KEGG" id="sse:Ssed_3482"/>
<dbReference type="eggNOG" id="COG1057">
    <property type="taxonomic scope" value="Bacteria"/>
</dbReference>
<dbReference type="HOGENOM" id="CLU_069765_0_0_6"/>
<dbReference type="OrthoDB" id="5295945at2"/>
<dbReference type="UniPathway" id="UPA00253">
    <property type="reaction ID" value="UER00332"/>
</dbReference>
<dbReference type="Proteomes" id="UP000002015">
    <property type="component" value="Chromosome"/>
</dbReference>
<dbReference type="GO" id="GO:0005524">
    <property type="term" value="F:ATP binding"/>
    <property type="evidence" value="ECO:0007669"/>
    <property type="project" value="UniProtKB-KW"/>
</dbReference>
<dbReference type="GO" id="GO:0004515">
    <property type="term" value="F:nicotinate-nucleotide adenylyltransferase activity"/>
    <property type="evidence" value="ECO:0007669"/>
    <property type="project" value="UniProtKB-UniRule"/>
</dbReference>
<dbReference type="GO" id="GO:0009435">
    <property type="term" value="P:NAD biosynthetic process"/>
    <property type="evidence" value="ECO:0007669"/>
    <property type="project" value="UniProtKB-UniRule"/>
</dbReference>
<dbReference type="CDD" id="cd02165">
    <property type="entry name" value="NMNAT"/>
    <property type="match status" value="1"/>
</dbReference>
<dbReference type="Gene3D" id="3.40.50.620">
    <property type="entry name" value="HUPs"/>
    <property type="match status" value="1"/>
</dbReference>
<dbReference type="HAMAP" id="MF_00244">
    <property type="entry name" value="NaMN_adenylyltr"/>
    <property type="match status" value="1"/>
</dbReference>
<dbReference type="InterPro" id="IPR004821">
    <property type="entry name" value="Cyt_trans-like"/>
</dbReference>
<dbReference type="InterPro" id="IPR005248">
    <property type="entry name" value="NadD/NMNAT"/>
</dbReference>
<dbReference type="InterPro" id="IPR014729">
    <property type="entry name" value="Rossmann-like_a/b/a_fold"/>
</dbReference>
<dbReference type="NCBIfam" id="TIGR00125">
    <property type="entry name" value="cyt_tran_rel"/>
    <property type="match status" value="1"/>
</dbReference>
<dbReference type="NCBIfam" id="TIGR00482">
    <property type="entry name" value="nicotinate (nicotinamide) nucleotide adenylyltransferase"/>
    <property type="match status" value="1"/>
</dbReference>
<dbReference type="NCBIfam" id="NF000839">
    <property type="entry name" value="PRK00071.1-1"/>
    <property type="match status" value="1"/>
</dbReference>
<dbReference type="NCBIfam" id="NF000840">
    <property type="entry name" value="PRK00071.1-3"/>
    <property type="match status" value="1"/>
</dbReference>
<dbReference type="PANTHER" id="PTHR39321">
    <property type="entry name" value="NICOTINATE-NUCLEOTIDE ADENYLYLTRANSFERASE-RELATED"/>
    <property type="match status" value="1"/>
</dbReference>
<dbReference type="PANTHER" id="PTHR39321:SF3">
    <property type="entry name" value="PHOSPHOPANTETHEINE ADENYLYLTRANSFERASE"/>
    <property type="match status" value="1"/>
</dbReference>
<dbReference type="Pfam" id="PF01467">
    <property type="entry name" value="CTP_transf_like"/>
    <property type="match status" value="1"/>
</dbReference>
<dbReference type="SUPFAM" id="SSF52374">
    <property type="entry name" value="Nucleotidylyl transferase"/>
    <property type="match status" value="1"/>
</dbReference>
<organism>
    <name type="scientific">Shewanella sediminis (strain HAW-EB3)</name>
    <dbReference type="NCBI Taxonomy" id="425104"/>
    <lineage>
        <taxon>Bacteria</taxon>
        <taxon>Pseudomonadati</taxon>
        <taxon>Pseudomonadota</taxon>
        <taxon>Gammaproteobacteria</taxon>
        <taxon>Alteromonadales</taxon>
        <taxon>Shewanellaceae</taxon>
        <taxon>Shewanella</taxon>
    </lineage>
</organism>
<name>NADD_SHESH</name>
<reference key="1">
    <citation type="submission" date="2007-08" db="EMBL/GenBank/DDBJ databases">
        <title>Complete sequence of Shewanella sediminis HAW-EB3.</title>
        <authorList>
            <consortium name="US DOE Joint Genome Institute"/>
            <person name="Copeland A."/>
            <person name="Lucas S."/>
            <person name="Lapidus A."/>
            <person name="Barry K."/>
            <person name="Glavina del Rio T."/>
            <person name="Dalin E."/>
            <person name="Tice H."/>
            <person name="Pitluck S."/>
            <person name="Chertkov O."/>
            <person name="Brettin T."/>
            <person name="Bruce D."/>
            <person name="Detter J.C."/>
            <person name="Han C."/>
            <person name="Schmutz J."/>
            <person name="Larimer F."/>
            <person name="Land M."/>
            <person name="Hauser L."/>
            <person name="Kyrpides N."/>
            <person name="Kim E."/>
            <person name="Zhao J.-S."/>
            <person name="Richardson P."/>
        </authorList>
    </citation>
    <scope>NUCLEOTIDE SEQUENCE [LARGE SCALE GENOMIC DNA]</scope>
    <source>
        <strain>HAW-EB3</strain>
    </source>
</reference>
<proteinExistence type="inferred from homology"/>
<keyword id="KW-0067">ATP-binding</keyword>
<keyword id="KW-0520">NAD</keyword>
<keyword id="KW-0547">Nucleotide-binding</keyword>
<keyword id="KW-0548">Nucleotidyltransferase</keyword>
<keyword id="KW-0662">Pyridine nucleotide biosynthesis</keyword>
<keyword id="KW-1185">Reference proteome</keyword>
<keyword id="KW-0808">Transferase</keyword>
<accession>A8FZ13</accession>
<feature type="chain" id="PRO_1000078392" description="Probable nicotinate-nucleotide adenylyltransferase">
    <location>
        <begin position="1"/>
        <end position="211"/>
    </location>
</feature>
<sequence length="211" mass="24418">MRIGILGGTFDPIHFGHIRPALEVRDKLNLDRVWLMPNHIPPHKASTCVSTEQRLEMVQLVCDQYDEFDLCDIEAKRDTPSYLVTTLKQLRDEHPNDEFYFIMGMDSLVSLPTWYEWRSIFTLCHIVVSERHGWCLNPDSAIYEEYEHRLTSTNQIPSQSTGLIIPIEIAPQPYSSTEIRHQLFNGIIPENALPSKIIKFIQHNSLYQAPA</sequence>
<protein>
    <recommendedName>
        <fullName evidence="1">Probable nicotinate-nucleotide adenylyltransferase</fullName>
        <ecNumber evidence="1">2.7.7.18</ecNumber>
    </recommendedName>
    <alternativeName>
        <fullName evidence="1">Deamido-NAD(+) diphosphorylase</fullName>
    </alternativeName>
    <alternativeName>
        <fullName evidence="1">Deamido-NAD(+) pyrophosphorylase</fullName>
    </alternativeName>
    <alternativeName>
        <fullName evidence="1">Nicotinate mononucleotide adenylyltransferase</fullName>
        <shortName evidence="1">NaMN adenylyltransferase</shortName>
    </alternativeName>
</protein>
<gene>
    <name evidence="1" type="primary">nadD</name>
    <name type="ordered locus">Ssed_3482</name>
</gene>
<comment type="function">
    <text evidence="1">Catalyzes the reversible adenylation of nicotinate mononucleotide (NaMN) to nicotinic acid adenine dinucleotide (NaAD).</text>
</comment>
<comment type="catalytic activity">
    <reaction evidence="1">
        <text>nicotinate beta-D-ribonucleotide + ATP + H(+) = deamido-NAD(+) + diphosphate</text>
        <dbReference type="Rhea" id="RHEA:22860"/>
        <dbReference type="ChEBI" id="CHEBI:15378"/>
        <dbReference type="ChEBI" id="CHEBI:30616"/>
        <dbReference type="ChEBI" id="CHEBI:33019"/>
        <dbReference type="ChEBI" id="CHEBI:57502"/>
        <dbReference type="ChEBI" id="CHEBI:58437"/>
        <dbReference type="EC" id="2.7.7.18"/>
    </reaction>
</comment>
<comment type="pathway">
    <text evidence="1">Cofactor biosynthesis; NAD(+) biosynthesis; deamido-NAD(+) from nicotinate D-ribonucleotide: step 1/1.</text>
</comment>
<comment type="similarity">
    <text evidence="1">Belongs to the NadD family.</text>
</comment>
<evidence type="ECO:0000255" key="1">
    <source>
        <dbReference type="HAMAP-Rule" id="MF_00244"/>
    </source>
</evidence>